<name>ATPB_PARDP</name>
<proteinExistence type="evidence at protein level"/>
<protein>
    <recommendedName>
        <fullName evidence="1">ATP synthase subunit beta</fullName>
        <ecNumber evidence="1">7.1.2.2</ecNumber>
    </recommendedName>
    <alternativeName>
        <fullName evidence="1">ATP synthase F1 sector subunit beta</fullName>
    </alternativeName>
    <alternativeName>
        <fullName evidence="1">F-ATPase subunit beta</fullName>
    </alternativeName>
</protein>
<comment type="function">
    <text evidence="1">Produces ATP from ADP in the presence of a proton gradient across the membrane. The catalytic sites are hosted primarily by the beta subunits.</text>
</comment>
<comment type="catalytic activity">
    <reaction evidence="1">
        <text>ATP + H2O + 4 H(+)(in) = ADP + phosphate + 5 H(+)(out)</text>
        <dbReference type="Rhea" id="RHEA:57720"/>
        <dbReference type="ChEBI" id="CHEBI:15377"/>
        <dbReference type="ChEBI" id="CHEBI:15378"/>
        <dbReference type="ChEBI" id="CHEBI:30616"/>
        <dbReference type="ChEBI" id="CHEBI:43474"/>
        <dbReference type="ChEBI" id="CHEBI:456216"/>
        <dbReference type="EC" id="7.1.2.2"/>
    </reaction>
</comment>
<comment type="subunit">
    <text evidence="1">F-type ATPases have 2 components, CF(1) - the catalytic core - and CF(0) - the membrane proton channel. CF(1) has five subunits: alpha(3), beta(3), gamma(1), delta(1), epsilon(1). CF(0) has three main subunits: a(1), b(2) and c(9-12). The alpha and beta chains form an alternating ring which encloses part of the gamma chain. CF(1) is attached to CF(0) by a central stalk formed by the gamma and epsilon chains, while a peripheral stalk is formed by the delta and b chains.</text>
</comment>
<comment type="subcellular location">
    <subcellularLocation>
        <location evidence="1">Cell inner membrane</location>
        <topology evidence="1">Peripheral membrane protein</topology>
    </subcellularLocation>
</comment>
<comment type="similarity">
    <text evidence="1">Belongs to the ATPase alpha/beta chains family.</text>
</comment>
<accession>A1B8P0</accession>
<gene>
    <name evidence="1" type="primary">atpD</name>
    <name type="ordered locus">Pden_3818</name>
</gene>
<reference key="1">
    <citation type="submission" date="2006-12" db="EMBL/GenBank/DDBJ databases">
        <title>Complete sequence of chromosome 2 of Paracoccus denitrificans PD1222.</title>
        <authorList>
            <person name="Copeland A."/>
            <person name="Lucas S."/>
            <person name="Lapidus A."/>
            <person name="Barry K."/>
            <person name="Detter J.C."/>
            <person name="Glavina del Rio T."/>
            <person name="Hammon N."/>
            <person name="Israni S."/>
            <person name="Dalin E."/>
            <person name="Tice H."/>
            <person name="Pitluck S."/>
            <person name="Munk A.C."/>
            <person name="Brettin T."/>
            <person name="Bruce D."/>
            <person name="Han C."/>
            <person name="Tapia R."/>
            <person name="Gilna P."/>
            <person name="Schmutz J."/>
            <person name="Larimer F."/>
            <person name="Land M."/>
            <person name="Hauser L."/>
            <person name="Kyrpides N."/>
            <person name="Lykidis A."/>
            <person name="Spiro S."/>
            <person name="Richardson D.J."/>
            <person name="Moir J.W.B."/>
            <person name="Ferguson S.J."/>
            <person name="van Spanning R.J.M."/>
            <person name="Richardson P."/>
        </authorList>
    </citation>
    <scope>NUCLEOTIDE SEQUENCE [LARGE SCALE GENOMIC DNA]</scope>
    <source>
        <strain>Pd 1222</strain>
    </source>
</reference>
<sequence length="474" mass="50339">MAEANGKITQVIGAVVDVQFDGQLPAILNALETENNGKRLVLEVAQHLGENTVRTIAMDATEGLVRGLPVKDTGGPIMVPVGDATLGRILNVVGEPVDEGGPVEATQTRAIHQQAPDFAAQATASEILVTGIKVIDLLAPYSKGGKIGLFGGAGVGKTVLIMELINNIAKVHSGYSVFAGVGERTREGNDLYHEMVESGVIKPDDLSKSQVALVYGQMNEPPGARMRVALTGLTVAEQFRDATGTDVLFFVDNIFRFTQAGSEVSALLGRIPSAVGYQPTLATDMGAMQERITSTKNGSITSIQAVYVPADDLTDPAPATTFAHLDATTVLSRAISELGIYPAVDPLDSNSRILDPAVVGEEHYQVARDVQGILQKYKSLQDIIAILGMDELSEEDKLTVARARKIQRFLSQPFDVAKVFTGSDGVQVPLEDTIKSFKAVVAGEYDHLPEAAFYMVGGIEDVKAKAQRLAADAA</sequence>
<keyword id="KW-0002">3D-structure</keyword>
<keyword id="KW-0066">ATP synthesis</keyword>
<keyword id="KW-0067">ATP-binding</keyword>
<keyword id="KW-0997">Cell inner membrane</keyword>
<keyword id="KW-1003">Cell membrane</keyword>
<keyword id="KW-0139">CF(1)</keyword>
<keyword id="KW-0375">Hydrogen ion transport</keyword>
<keyword id="KW-0406">Ion transport</keyword>
<keyword id="KW-0472">Membrane</keyword>
<keyword id="KW-0547">Nucleotide-binding</keyword>
<keyword id="KW-1185">Reference proteome</keyword>
<keyword id="KW-1278">Translocase</keyword>
<keyword id="KW-0813">Transport</keyword>
<evidence type="ECO:0000255" key="1">
    <source>
        <dbReference type="HAMAP-Rule" id="MF_01347"/>
    </source>
</evidence>
<evidence type="ECO:0007829" key="2">
    <source>
        <dbReference type="PDB" id="5CDF"/>
    </source>
</evidence>
<dbReference type="EC" id="7.1.2.2" evidence="1"/>
<dbReference type="EMBL" id="CP000490">
    <property type="protein sequence ID" value="ABL71884.1"/>
    <property type="molecule type" value="Genomic_DNA"/>
</dbReference>
<dbReference type="RefSeq" id="WP_011750053.1">
    <property type="nucleotide sequence ID" value="NC_008687.1"/>
</dbReference>
<dbReference type="PDB" id="5CDF">
    <property type="method" value="X-ray"/>
    <property type="resolution" value="2.30 A"/>
    <property type="chains" value="E=1-474"/>
</dbReference>
<dbReference type="PDB" id="5DN6">
    <property type="method" value="X-ray"/>
    <property type="resolution" value="3.98 A"/>
    <property type="chains" value="D/E/F=1-474"/>
</dbReference>
<dbReference type="PDBsum" id="5CDF"/>
<dbReference type="PDBsum" id="5DN6"/>
<dbReference type="SMR" id="A1B8P0"/>
<dbReference type="STRING" id="318586.Pden_3818"/>
<dbReference type="TCDB" id="3.A.2.1.7">
    <property type="family name" value="the h+- or na+-translocating f-type, v-type and a-type atpase (f-atpase) superfamily"/>
</dbReference>
<dbReference type="EnsemblBacteria" id="ABL71884">
    <property type="protein sequence ID" value="ABL71884"/>
    <property type="gene ID" value="Pden_3818"/>
</dbReference>
<dbReference type="GeneID" id="93453480"/>
<dbReference type="KEGG" id="pde:Pden_3818"/>
<dbReference type="eggNOG" id="COG0055">
    <property type="taxonomic scope" value="Bacteria"/>
</dbReference>
<dbReference type="HOGENOM" id="CLU_022398_0_2_5"/>
<dbReference type="OrthoDB" id="9801639at2"/>
<dbReference type="EvolutionaryTrace" id="A1B8P0"/>
<dbReference type="Proteomes" id="UP000000361">
    <property type="component" value="Chromosome 2"/>
</dbReference>
<dbReference type="GO" id="GO:0005886">
    <property type="term" value="C:plasma membrane"/>
    <property type="evidence" value="ECO:0007669"/>
    <property type="project" value="UniProtKB-SubCell"/>
</dbReference>
<dbReference type="GO" id="GO:0045259">
    <property type="term" value="C:proton-transporting ATP synthase complex"/>
    <property type="evidence" value="ECO:0007669"/>
    <property type="project" value="UniProtKB-KW"/>
</dbReference>
<dbReference type="GO" id="GO:0005524">
    <property type="term" value="F:ATP binding"/>
    <property type="evidence" value="ECO:0007669"/>
    <property type="project" value="UniProtKB-UniRule"/>
</dbReference>
<dbReference type="GO" id="GO:0016887">
    <property type="term" value="F:ATP hydrolysis activity"/>
    <property type="evidence" value="ECO:0007669"/>
    <property type="project" value="InterPro"/>
</dbReference>
<dbReference type="GO" id="GO:0046933">
    <property type="term" value="F:proton-transporting ATP synthase activity, rotational mechanism"/>
    <property type="evidence" value="ECO:0007669"/>
    <property type="project" value="UniProtKB-UniRule"/>
</dbReference>
<dbReference type="CDD" id="cd18110">
    <property type="entry name" value="ATP-synt_F1_beta_C"/>
    <property type="match status" value="1"/>
</dbReference>
<dbReference type="CDD" id="cd18115">
    <property type="entry name" value="ATP-synt_F1_beta_N"/>
    <property type="match status" value="1"/>
</dbReference>
<dbReference type="CDD" id="cd01133">
    <property type="entry name" value="F1-ATPase_beta_CD"/>
    <property type="match status" value="1"/>
</dbReference>
<dbReference type="FunFam" id="1.10.1140.10:FF:000001">
    <property type="entry name" value="ATP synthase subunit beta"/>
    <property type="match status" value="1"/>
</dbReference>
<dbReference type="FunFam" id="2.40.10.170:FF:000004">
    <property type="entry name" value="ATP synthase subunit beta"/>
    <property type="match status" value="1"/>
</dbReference>
<dbReference type="FunFam" id="3.40.50.300:FF:000026">
    <property type="entry name" value="ATP synthase subunit beta"/>
    <property type="match status" value="1"/>
</dbReference>
<dbReference type="Gene3D" id="2.40.10.170">
    <property type="match status" value="1"/>
</dbReference>
<dbReference type="Gene3D" id="1.10.1140.10">
    <property type="entry name" value="Bovine Mitochondrial F1-atpase, Atp Synthase Beta Chain, Chain D, domain 3"/>
    <property type="match status" value="1"/>
</dbReference>
<dbReference type="Gene3D" id="3.40.50.300">
    <property type="entry name" value="P-loop containing nucleotide triphosphate hydrolases"/>
    <property type="match status" value="1"/>
</dbReference>
<dbReference type="HAMAP" id="MF_01347">
    <property type="entry name" value="ATP_synth_beta_bact"/>
    <property type="match status" value="1"/>
</dbReference>
<dbReference type="InterPro" id="IPR003593">
    <property type="entry name" value="AAA+_ATPase"/>
</dbReference>
<dbReference type="InterPro" id="IPR055190">
    <property type="entry name" value="ATP-synt_VA_C"/>
</dbReference>
<dbReference type="InterPro" id="IPR005722">
    <property type="entry name" value="ATP_synth_F1_bsu"/>
</dbReference>
<dbReference type="InterPro" id="IPR020003">
    <property type="entry name" value="ATPase_a/bsu_AS"/>
</dbReference>
<dbReference type="InterPro" id="IPR050053">
    <property type="entry name" value="ATPase_alpha/beta_chains"/>
</dbReference>
<dbReference type="InterPro" id="IPR004100">
    <property type="entry name" value="ATPase_F1/V1/A1_a/bsu_N"/>
</dbReference>
<dbReference type="InterPro" id="IPR036121">
    <property type="entry name" value="ATPase_F1/V1/A1_a/bsu_N_sf"/>
</dbReference>
<dbReference type="InterPro" id="IPR000194">
    <property type="entry name" value="ATPase_F1/V1/A1_a/bsu_nucl-bd"/>
</dbReference>
<dbReference type="InterPro" id="IPR024034">
    <property type="entry name" value="ATPase_F1/V1_b/a_C"/>
</dbReference>
<dbReference type="InterPro" id="IPR027417">
    <property type="entry name" value="P-loop_NTPase"/>
</dbReference>
<dbReference type="NCBIfam" id="TIGR01039">
    <property type="entry name" value="atpD"/>
    <property type="match status" value="1"/>
</dbReference>
<dbReference type="PANTHER" id="PTHR15184">
    <property type="entry name" value="ATP SYNTHASE"/>
    <property type="match status" value="1"/>
</dbReference>
<dbReference type="PANTHER" id="PTHR15184:SF71">
    <property type="entry name" value="ATP SYNTHASE SUBUNIT BETA, MITOCHONDRIAL"/>
    <property type="match status" value="1"/>
</dbReference>
<dbReference type="Pfam" id="PF00006">
    <property type="entry name" value="ATP-synt_ab"/>
    <property type="match status" value="1"/>
</dbReference>
<dbReference type="Pfam" id="PF02874">
    <property type="entry name" value="ATP-synt_ab_N"/>
    <property type="match status" value="1"/>
</dbReference>
<dbReference type="Pfam" id="PF22919">
    <property type="entry name" value="ATP-synt_VA_C"/>
    <property type="match status" value="1"/>
</dbReference>
<dbReference type="PIRSF" id="PIRSF039072">
    <property type="entry name" value="ATPase_subunit_beta"/>
    <property type="match status" value="1"/>
</dbReference>
<dbReference type="SMART" id="SM00382">
    <property type="entry name" value="AAA"/>
    <property type="match status" value="1"/>
</dbReference>
<dbReference type="SUPFAM" id="SSF47917">
    <property type="entry name" value="C-terminal domain of alpha and beta subunits of F1 ATP synthase"/>
    <property type="match status" value="1"/>
</dbReference>
<dbReference type="SUPFAM" id="SSF50615">
    <property type="entry name" value="N-terminal domain of alpha and beta subunits of F1 ATP synthase"/>
    <property type="match status" value="1"/>
</dbReference>
<dbReference type="SUPFAM" id="SSF52540">
    <property type="entry name" value="P-loop containing nucleoside triphosphate hydrolases"/>
    <property type="match status" value="1"/>
</dbReference>
<dbReference type="PROSITE" id="PS00152">
    <property type="entry name" value="ATPASE_ALPHA_BETA"/>
    <property type="match status" value="1"/>
</dbReference>
<organism>
    <name type="scientific">Paracoccus denitrificans (strain Pd 1222)</name>
    <dbReference type="NCBI Taxonomy" id="318586"/>
    <lineage>
        <taxon>Bacteria</taxon>
        <taxon>Pseudomonadati</taxon>
        <taxon>Pseudomonadota</taxon>
        <taxon>Alphaproteobacteria</taxon>
        <taxon>Rhodobacterales</taxon>
        <taxon>Paracoccaceae</taxon>
        <taxon>Paracoccus</taxon>
    </lineage>
</organism>
<feature type="chain" id="PRO_0000339561" description="ATP synthase subunit beta">
    <location>
        <begin position="1"/>
        <end position="474"/>
    </location>
</feature>
<feature type="binding site" evidence="1">
    <location>
        <begin position="151"/>
        <end position="158"/>
    </location>
    <ligand>
        <name>ATP</name>
        <dbReference type="ChEBI" id="CHEBI:30616"/>
    </ligand>
</feature>
<feature type="strand" evidence="2">
    <location>
        <begin position="6"/>
        <end position="12"/>
    </location>
</feature>
<feature type="strand" evidence="2">
    <location>
        <begin position="15"/>
        <end position="23"/>
    </location>
</feature>
<feature type="strand" evidence="2">
    <location>
        <begin position="30"/>
        <end position="35"/>
    </location>
</feature>
<feature type="strand" evidence="2">
    <location>
        <begin position="38"/>
        <end position="47"/>
    </location>
</feature>
<feature type="strand" evidence="2">
    <location>
        <begin position="49"/>
        <end position="59"/>
    </location>
</feature>
<feature type="strand" evidence="2">
    <location>
        <begin position="69"/>
        <end position="72"/>
    </location>
</feature>
<feature type="strand" evidence="2">
    <location>
        <begin position="74"/>
        <end position="76"/>
    </location>
</feature>
<feature type="strand" evidence="2">
    <location>
        <begin position="78"/>
        <end position="80"/>
    </location>
</feature>
<feature type="helix" evidence="2">
    <location>
        <begin position="83"/>
        <end position="85"/>
    </location>
</feature>
<feature type="strand" evidence="2">
    <location>
        <begin position="108"/>
        <end position="112"/>
    </location>
</feature>
<feature type="helix" evidence="2">
    <location>
        <begin position="133"/>
        <end position="138"/>
    </location>
</feature>
<feature type="strand" evidence="2">
    <location>
        <begin position="146"/>
        <end position="150"/>
    </location>
</feature>
<feature type="strand" evidence="2">
    <location>
        <begin position="153"/>
        <end position="156"/>
    </location>
</feature>
<feature type="helix" evidence="2">
    <location>
        <begin position="157"/>
        <end position="172"/>
    </location>
</feature>
<feature type="strand" evidence="2">
    <location>
        <begin position="176"/>
        <end position="182"/>
    </location>
</feature>
<feature type="helix" evidence="2">
    <location>
        <begin position="185"/>
        <end position="197"/>
    </location>
</feature>
<feature type="helix" evidence="2">
    <location>
        <begin position="206"/>
        <end position="208"/>
    </location>
</feature>
<feature type="strand" evidence="2">
    <location>
        <begin position="210"/>
        <end position="216"/>
    </location>
</feature>
<feature type="helix" evidence="2">
    <location>
        <begin position="222"/>
        <end position="243"/>
    </location>
</feature>
<feature type="strand" evidence="2">
    <location>
        <begin position="246"/>
        <end position="252"/>
    </location>
</feature>
<feature type="helix" evidence="2">
    <location>
        <begin position="254"/>
        <end position="267"/>
    </location>
</feature>
<feature type="turn" evidence="2">
    <location>
        <begin position="280"/>
        <end position="283"/>
    </location>
</feature>
<feature type="helix" evidence="2">
    <location>
        <begin position="288"/>
        <end position="291"/>
    </location>
</feature>
<feature type="strand" evidence="2">
    <location>
        <begin position="298"/>
        <end position="305"/>
    </location>
</feature>
<feature type="strand" evidence="2">
    <location>
        <begin position="326"/>
        <end position="331"/>
    </location>
</feature>
<feature type="helix" evidence="2">
    <location>
        <begin position="333"/>
        <end position="337"/>
    </location>
</feature>
<feature type="turn" evidence="2">
    <location>
        <begin position="346"/>
        <end position="348"/>
    </location>
</feature>
<feature type="helix" evidence="2">
    <location>
        <begin position="356"/>
        <end position="359"/>
    </location>
</feature>
<feature type="helix" evidence="2">
    <location>
        <begin position="361"/>
        <end position="379"/>
    </location>
</feature>
<feature type="helix" evidence="2">
    <location>
        <begin position="381"/>
        <end position="386"/>
    </location>
</feature>
<feature type="helix" evidence="2">
    <location>
        <begin position="394"/>
        <end position="410"/>
    </location>
</feature>
<feature type="turn" evidence="2">
    <location>
        <begin position="415"/>
        <end position="417"/>
    </location>
</feature>
<feature type="helix" evidence="2">
    <location>
        <begin position="418"/>
        <end position="421"/>
    </location>
</feature>
<feature type="helix" evidence="2">
    <location>
        <begin position="430"/>
        <end position="442"/>
    </location>
</feature>
<feature type="turn" evidence="2">
    <location>
        <begin position="443"/>
        <end position="447"/>
    </location>
</feature>
<feature type="helix" evidence="2">
    <location>
        <begin position="450"/>
        <end position="453"/>
    </location>
</feature>
<feature type="helix" evidence="2">
    <location>
        <begin position="459"/>
        <end position="468"/>
    </location>
</feature>